<evidence type="ECO:0000255" key="1">
    <source>
        <dbReference type="HAMAP-Rule" id="MF_00278"/>
    </source>
</evidence>
<accession>Q4FNT5</accession>
<keyword id="KW-0028">Amino-acid biosynthesis</keyword>
<keyword id="KW-0963">Cytoplasm</keyword>
<keyword id="KW-0315">Glutamine amidotransferase</keyword>
<keyword id="KW-0368">Histidine biosynthesis</keyword>
<keyword id="KW-0378">Hydrolase</keyword>
<keyword id="KW-0456">Lyase</keyword>
<keyword id="KW-1185">Reference proteome</keyword>
<organism>
    <name type="scientific">Pelagibacter ubique (strain HTCC1062)</name>
    <dbReference type="NCBI Taxonomy" id="335992"/>
    <lineage>
        <taxon>Bacteria</taxon>
        <taxon>Pseudomonadati</taxon>
        <taxon>Pseudomonadota</taxon>
        <taxon>Alphaproteobacteria</taxon>
        <taxon>Candidatus Pelagibacterales</taxon>
        <taxon>Candidatus Pelagibacteraceae</taxon>
        <taxon>Candidatus Pelagibacter</taxon>
    </lineage>
</organism>
<comment type="function">
    <text evidence="1">IGPS catalyzes the conversion of PRFAR and glutamine to IGP, AICAR and glutamate. The HisH subunit catalyzes the hydrolysis of glutamine to glutamate and ammonia as part of the synthesis of IGP and AICAR. The resulting ammonia molecule is channeled to the active site of HisF.</text>
</comment>
<comment type="catalytic activity">
    <reaction evidence="1">
        <text>5-[(5-phospho-1-deoxy-D-ribulos-1-ylimino)methylamino]-1-(5-phospho-beta-D-ribosyl)imidazole-4-carboxamide + L-glutamine = D-erythro-1-(imidazol-4-yl)glycerol 3-phosphate + 5-amino-1-(5-phospho-beta-D-ribosyl)imidazole-4-carboxamide + L-glutamate + H(+)</text>
        <dbReference type="Rhea" id="RHEA:24793"/>
        <dbReference type="ChEBI" id="CHEBI:15378"/>
        <dbReference type="ChEBI" id="CHEBI:29985"/>
        <dbReference type="ChEBI" id="CHEBI:58278"/>
        <dbReference type="ChEBI" id="CHEBI:58359"/>
        <dbReference type="ChEBI" id="CHEBI:58475"/>
        <dbReference type="ChEBI" id="CHEBI:58525"/>
        <dbReference type="EC" id="4.3.2.10"/>
    </reaction>
</comment>
<comment type="catalytic activity">
    <reaction evidence="1">
        <text>L-glutamine + H2O = L-glutamate + NH4(+)</text>
        <dbReference type="Rhea" id="RHEA:15889"/>
        <dbReference type="ChEBI" id="CHEBI:15377"/>
        <dbReference type="ChEBI" id="CHEBI:28938"/>
        <dbReference type="ChEBI" id="CHEBI:29985"/>
        <dbReference type="ChEBI" id="CHEBI:58359"/>
        <dbReference type="EC" id="3.5.1.2"/>
    </reaction>
</comment>
<comment type="pathway">
    <text evidence="1">Amino-acid biosynthesis; L-histidine biosynthesis; L-histidine from 5-phospho-alpha-D-ribose 1-diphosphate: step 5/9.</text>
</comment>
<comment type="subunit">
    <text evidence="1">Heterodimer of HisH and HisF.</text>
</comment>
<comment type="subcellular location">
    <subcellularLocation>
        <location evidence="1">Cytoplasm</location>
    </subcellularLocation>
</comment>
<proteinExistence type="inferred from homology"/>
<protein>
    <recommendedName>
        <fullName evidence="1">Imidazole glycerol phosphate synthase subunit HisH</fullName>
        <ecNumber evidence="1">4.3.2.10</ecNumber>
    </recommendedName>
    <alternativeName>
        <fullName evidence="1">IGP synthase glutaminase subunit</fullName>
        <ecNumber evidence="1">3.5.1.2</ecNumber>
    </alternativeName>
    <alternativeName>
        <fullName evidence="1">IGP synthase subunit HisH</fullName>
    </alternativeName>
    <alternativeName>
        <fullName evidence="1">ImGP synthase subunit HisH</fullName>
        <shortName evidence="1">IGPS subunit HisH</shortName>
    </alternativeName>
</protein>
<feature type="chain" id="PRO_0000231742" description="Imidazole glycerol phosphate synthase subunit HisH">
    <location>
        <begin position="1"/>
        <end position="208"/>
    </location>
</feature>
<feature type="domain" description="Glutamine amidotransferase type-1" evidence="1">
    <location>
        <begin position="2"/>
        <end position="208"/>
    </location>
</feature>
<feature type="active site" description="Nucleophile" evidence="1">
    <location>
        <position position="85"/>
    </location>
</feature>
<feature type="active site" evidence="1">
    <location>
        <position position="190"/>
    </location>
</feature>
<feature type="active site" evidence="1">
    <location>
        <position position="192"/>
    </location>
</feature>
<name>HIS5_PELUB</name>
<gene>
    <name evidence="1" type="primary">hisH</name>
    <name type="ordered locus">SAR11_0331</name>
</gene>
<dbReference type="EC" id="4.3.2.10" evidence="1"/>
<dbReference type="EC" id="3.5.1.2" evidence="1"/>
<dbReference type="EMBL" id="CP000084">
    <property type="protein sequence ID" value="AAZ21154.1"/>
    <property type="molecule type" value="Genomic_DNA"/>
</dbReference>
<dbReference type="RefSeq" id="WP_006997576.1">
    <property type="nucleotide sequence ID" value="NC_007205.1"/>
</dbReference>
<dbReference type="SMR" id="Q4FNT5"/>
<dbReference type="STRING" id="335992.SAR11_0331"/>
<dbReference type="GeneID" id="66294830"/>
<dbReference type="KEGG" id="pub:SAR11_0331"/>
<dbReference type="eggNOG" id="COG0118">
    <property type="taxonomic scope" value="Bacteria"/>
</dbReference>
<dbReference type="HOGENOM" id="CLU_071837_2_0_5"/>
<dbReference type="OrthoDB" id="9807137at2"/>
<dbReference type="UniPathway" id="UPA00031">
    <property type="reaction ID" value="UER00010"/>
</dbReference>
<dbReference type="Proteomes" id="UP000002528">
    <property type="component" value="Chromosome"/>
</dbReference>
<dbReference type="GO" id="GO:0005737">
    <property type="term" value="C:cytoplasm"/>
    <property type="evidence" value="ECO:0007669"/>
    <property type="project" value="UniProtKB-SubCell"/>
</dbReference>
<dbReference type="GO" id="GO:0004359">
    <property type="term" value="F:glutaminase activity"/>
    <property type="evidence" value="ECO:0007669"/>
    <property type="project" value="UniProtKB-EC"/>
</dbReference>
<dbReference type="GO" id="GO:0000107">
    <property type="term" value="F:imidazoleglycerol-phosphate synthase activity"/>
    <property type="evidence" value="ECO:0007669"/>
    <property type="project" value="UniProtKB-UniRule"/>
</dbReference>
<dbReference type="GO" id="GO:0016829">
    <property type="term" value="F:lyase activity"/>
    <property type="evidence" value="ECO:0007669"/>
    <property type="project" value="UniProtKB-KW"/>
</dbReference>
<dbReference type="GO" id="GO:0000105">
    <property type="term" value="P:L-histidine biosynthetic process"/>
    <property type="evidence" value="ECO:0007669"/>
    <property type="project" value="UniProtKB-UniRule"/>
</dbReference>
<dbReference type="CDD" id="cd01748">
    <property type="entry name" value="GATase1_IGP_Synthase"/>
    <property type="match status" value="1"/>
</dbReference>
<dbReference type="Gene3D" id="3.40.50.880">
    <property type="match status" value="1"/>
</dbReference>
<dbReference type="HAMAP" id="MF_00278">
    <property type="entry name" value="HisH"/>
    <property type="match status" value="1"/>
</dbReference>
<dbReference type="InterPro" id="IPR029062">
    <property type="entry name" value="Class_I_gatase-like"/>
</dbReference>
<dbReference type="InterPro" id="IPR017926">
    <property type="entry name" value="GATASE"/>
</dbReference>
<dbReference type="InterPro" id="IPR010139">
    <property type="entry name" value="Imidazole-glycPsynth_HisH"/>
</dbReference>
<dbReference type="NCBIfam" id="TIGR01855">
    <property type="entry name" value="IMP_synth_hisH"/>
    <property type="match status" value="1"/>
</dbReference>
<dbReference type="PANTHER" id="PTHR42701">
    <property type="entry name" value="IMIDAZOLE GLYCEROL PHOSPHATE SYNTHASE SUBUNIT HISH"/>
    <property type="match status" value="1"/>
</dbReference>
<dbReference type="PANTHER" id="PTHR42701:SF1">
    <property type="entry name" value="IMIDAZOLE GLYCEROL PHOSPHATE SYNTHASE SUBUNIT HISH"/>
    <property type="match status" value="1"/>
</dbReference>
<dbReference type="Pfam" id="PF00117">
    <property type="entry name" value="GATase"/>
    <property type="match status" value="1"/>
</dbReference>
<dbReference type="PIRSF" id="PIRSF000495">
    <property type="entry name" value="Amidotransf_hisH"/>
    <property type="match status" value="1"/>
</dbReference>
<dbReference type="SUPFAM" id="SSF52317">
    <property type="entry name" value="Class I glutamine amidotransferase-like"/>
    <property type="match status" value="1"/>
</dbReference>
<dbReference type="PROSITE" id="PS51273">
    <property type="entry name" value="GATASE_TYPE_1"/>
    <property type="match status" value="1"/>
</dbReference>
<sequence>MNVTIVDYNSGNISSVINSFKEVAKDKVNIEVTSDLNKIRSSDKVVLPGQGSFKSCVDALNAINGLVETLNEFTVTNKKPLLGICVGLQMFADLGYEETETKGLGWISGKVSKIDNQNNKFKLPHIGWNEINIVKESKIFEGIKNKSHMYFVHSYEFIPDDKSVISATTDYSSNIVCSVEKENIFGTQFHPEKSDKLGLKIIENFLNL</sequence>
<reference key="1">
    <citation type="journal article" date="2005" name="Science">
        <title>Genome streamlining in a cosmopolitan oceanic bacterium.</title>
        <authorList>
            <person name="Giovannoni S.J."/>
            <person name="Tripp H.J."/>
            <person name="Givan S."/>
            <person name="Podar M."/>
            <person name="Vergin K.L."/>
            <person name="Baptista D."/>
            <person name="Bibbs L."/>
            <person name="Eads J."/>
            <person name="Richardson T.H."/>
            <person name="Noordewier M."/>
            <person name="Rappe M.S."/>
            <person name="Short J.M."/>
            <person name="Carrington J.C."/>
            <person name="Mathur E.J."/>
        </authorList>
    </citation>
    <scope>NUCLEOTIDE SEQUENCE [LARGE SCALE GENOMIC DNA]</scope>
    <source>
        <strain>HTCC1062</strain>
    </source>
</reference>